<gene>
    <name type="primary">RNF39</name>
    <name type="synonym">HZFW</name>
</gene>
<keyword id="KW-0963">Cytoplasm</keyword>
<keyword id="KW-0479">Metal-binding</keyword>
<keyword id="KW-1185">Reference proteome</keyword>
<keyword id="KW-0808">Transferase</keyword>
<keyword id="KW-0862">Zinc</keyword>
<keyword id="KW-0863">Zinc-finger</keyword>
<reference key="1">
    <citation type="journal article" date="2003" name="Proc. Natl. Acad. Sci. U.S.A.">
        <title>Comparative sequencing of human and chimpanzee MHC class I regions unveils insertions/deletions as the major path to genomic divergence.</title>
        <authorList>
            <person name="Anzai T."/>
            <person name="Shiina T."/>
            <person name="Kimura N."/>
            <person name="Yanagiya K."/>
            <person name="Kohara S."/>
            <person name="Shigenari A."/>
            <person name="Yamagata T."/>
            <person name="Kulski J.K."/>
            <person name="Naruse T.K."/>
            <person name="Fujimori Y."/>
            <person name="Fukuzumi Y."/>
            <person name="Yamazaki M."/>
            <person name="Tashiro H."/>
            <person name="Iwamoto C."/>
            <person name="Umehara Y."/>
            <person name="Imanishi T."/>
            <person name="Meyer A."/>
            <person name="Ikeo K."/>
            <person name="Gojobori T."/>
            <person name="Bahram S."/>
            <person name="Inoko H."/>
        </authorList>
    </citation>
    <scope>NUCLEOTIDE SEQUENCE [GENOMIC DNA]</scope>
</reference>
<reference key="2">
    <citation type="journal article" date="2006" name="Genetics">
        <title>Rapid evolution of major histocompatibility complex class I genes in primates generates new disease alleles in humans via hitchhiking diversity.</title>
        <authorList>
            <person name="Shiina T."/>
            <person name="Ota M."/>
            <person name="Shimizu S."/>
            <person name="Katsuyama Y."/>
            <person name="Hashimoto N."/>
            <person name="Takasu M."/>
            <person name="Anzai T."/>
            <person name="Kulski J.K."/>
            <person name="Kikkawa E."/>
            <person name="Naruse T."/>
            <person name="Kimura N."/>
            <person name="Yanagiya K."/>
            <person name="Watanabe A."/>
            <person name="Hosomichi K."/>
            <person name="Kohara S."/>
            <person name="Iwamoto C."/>
            <person name="Umehara Y."/>
            <person name="Meyer A."/>
            <person name="Wanner V."/>
            <person name="Sano K."/>
            <person name="Macquin C."/>
            <person name="Ikeo K."/>
            <person name="Tokunaga K."/>
            <person name="Gojobori T."/>
            <person name="Inoko H."/>
            <person name="Bahram S."/>
        </authorList>
    </citation>
    <scope>NUCLEOTIDE SEQUENCE [LARGE SCALE GENOMIC DNA]</scope>
</reference>
<name>RNF39_PANTR</name>
<comment type="function">
    <text evidence="1">Plays an inhibitory role in anti-RNA viral innate immunity by targeting the adapter DDX3X and promoting its 'Lys-48'-linked polyubiquitination. Alternatively, enhances the cGAS-STING pathway activation by promoting 'Lys-63'-linked ubiquitination of STING1, facilitating the STING1-TBK1 complex formation and STING1 activation.</text>
</comment>
<comment type="catalytic activity">
    <reaction evidence="1">
        <text>S-ubiquitinyl-[E2 ubiquitin-conjugating enzyme]-L-cysteine + [acceptor protein]-L-lysine = [E2 ubiquitin-conjugating enzyme]-L-cysteine + N(6)-ubiquitinyl-[acceptor protein]-L-lysine.</text>
        <dbReference type="EC" id="2.3.2.27"/>
    </reaction>
</comment>
<comment type="pathway">
    <text evidence="1">Protein modification; protein ubiquitination.</text>
</comment>
<comment type="subcellular location">
    <subcellularLocation>
        <location evidence="1">Cytoplasm</location>
    </subcellularLocation>
</comment>
<organism>
    <name type="scientific">Pan troglodytes</name>
    <name type="common">Chimpanzee</name>
    <dbReference type="NCBI Taxonomy" id="9598"/>
    <lineage>
        <taxon>Eukaryota</taxon>
        <taxon>Metazoa</taxon>
        <taxon>Chordata</taxon>
        <taxon>Craniata</taxon>
        <taxon>Vertebrata</taxon>
        <taxon>Euteleostomi</taxon>
        <taxon>Mammalia</taxon>
        <taxon>Eutheria</taxon>
        <taxon>Euarchontoglires</taxon>
        <taxon>Primates</taxon>
        <taxon>Haplorrhini</taxon>
        <taxon>Catarrhini</taxon>
        <taxon>Hominidae</taxon>
        <taxon>Pan</taxon>
    </lineage>
</organism>
<proteinExistence type="inferred from homology"/>
<evidence type="ECO:0000250" key="1">
    <source>
        <dbReference type="UniProtKB" id="Q9H2S5"/>
    </source>
</evidence>
<evidence type="ECO:0000255" key="2">
    <source>
        <dbReference type="PROSITE-ProRule" id="PRU00175"/>
    </source>
</evidence>
<evidence type="ECO:0000255" key="3">
    <source>
        <dbReference type="PROSITE-ProRule" id="PRU00548"/>
    </source>
</evidence>
<evidence type="ECO:0000256" key="4">
    <source>
        <dbReference type="SAM" id="MobiDB-lite"/>
    </source>
</evidence>
<dbReference type="EC" id="2.3.2.27" evidence="1"/>
<dbReference type="EMBL" id="BA000041">
    <property type="protein sequence ID" value="BAC78186.1"/>
    <property type="molecule type" value="Genomic_DNA"/>
</dbReference>
<dbReference type="EMBL" id="AB210195">
    <property type="protein sequence ID" value="BAE92811.1"/>
    <property type="molecule type" value="Genomic_DNA"/>
</dbReference>
<dbReference type="EMBL" id="AB210196">
    <property type="protein sequence ID" value="BAE92814.1"/>
    <property type="molecule type" value="Genomic_DNA"/>
</dbReference>
<dbReference type="RefSeq" id="NP_001107640.1">
    <property type="nucleotide sequence ID" value="NM_001114168.1"/>
</dbReference>
<dbReference type="SMR" id="Q7YR31"/>
<dbReference type="FunCoup" id="Q7YR31">
    <property type="interactions" value="4"/>
</dbReference>
<dbReference type="STRING" id="9598.ENSPTRP00000073690"/>
<dbReference type="PaxDb" id="9598-ENSPTRP00000054045"/>
<dbReference type="Ensembl" id="ENSPTRT00000087266.1">
    <property type="protein sequence ID" value="ENSPTRP00000073690.1"/>
    <property type="gene ID" value="ENSPTRG00000031491.2"/>
</dbReference>
<dbReference type="GeneID" id="750730"/>
<dbReference type="KEGG" id="ptr:750730"/>
<dbReference type="CTD" id="80352"/>
<dbReference type="VGNC" id="VGNC:57537">
    <property type="gene designation" value="RNF39"/>
</dbReference>
<dbReference type="eggNOG" id="KOG2177">
    <property type="taxonomic scope" value="Eukaryota"/>
</dbReference>
<dbReference type="GeneTree" id="ENSGT00940000162641"/>
<dbReference type="InParanoid" id="Q7YR31"/>
<dbReference type="OMA" id="HATLRIV"/>
<dbReference type="OrthoDB" id="11142at9604"/>
<dbReference type="UniPathway" id="UPA00143"/>
<dbReference type="Proteomes" id="UP000002277">
    <property type="component" value="Chromosome 6"/>
</dbReference>
<dbReference type="Bgee" id="ENSPTRG00000031491">
    <property type="expression patterns" value="Expressed in primary visual cortex and 8 other cell types or tissues"/>
</dbReference>
<dbReference type="GO" id="GO:0005737">
    <property type="term" value="C:cytoplasm"/>
    <property type="evidence" value="ECO:0000318"/>
    <property type="project" value="GO_Central"/>
</dbReference>
<dbReference type="GO" id="GO:0061630">
    <property type="term" value="F:ubiquitin protein ligase activity"/>
    <property type="evidence" value="ECO:0000318"/>
    <property type="project" value="GO_Central"/>
</dbReference>
<dbReference type="GO" id="GO:0008270">
    <property type="term" value="F:zinc ion binding"/>
    <property type="evidence" value="ECO:0007669"/>
    <property type="project" value="UniProtKB-KW"/>
</dbReference>
<dbReference type="GO" id="GO:0045087">
    <property type="term" value="P:innate immune response"/>
    <property type="evidence" value="ECO:0000318"/>
    <property type="project" value="GO_Central"/>
</dbReference>
<dbReference type="GO" id="GO:0039532">
    <property type="term" value="P:negative regulation of cytoplasmic pattern recognition receptor signaling pathway"/>
    <property type="evidence" value="ECO:0007669"/>
    <property type="project" value="Ensembl"/>
</dbReference>
<dbReference type="GO" id="GO:0141111">
    <property type="term" value="P:positive regulation of cGAS/STING signaling pathway"/>
    <property type="evidence" value="ECO:0007669"/>
    <property type="project" value="Ensembl"/>
</dbReference>
<dbReference type="GO" id="GO:0070534">
    <property type="term" value="P:protein K63-linked ubiquitination"/>
    <property type="evidence" value="ECO:0007669"/>
    <property type="project" value="Ensembl"/>
</dbReference>
<dbReference type="CDD" id="cd16592">
    <property type="entry name" value="RING-HC_RNF39"/>
    <property type="match status" value="1"/>
</dbReference>
<dbReference type="CDD" id="cd12888">
    <property type="entry name" value="SPRY_PRY_TRIM7_like"/>
    <property type="match status" value="1"/>
</dbReference>
<dbReference type="Gene3D" id="2.60.120.920">
    <property type="match status" value="1"/>
</dbReference>
<dbReference type="Gene3D" id="3.30.40.10">
    <property type="entry name" value="Zinc/RING finger domain, C3HC4 (zinc finger)"/>
    <property type="match status" value="1"/>
</dbReference>
<dbReference type="InterPro" id="IPR001870">
    <property type="entry name" value="B30.2/SPRY"/>
</dbReference>
<dbReference type="InterPro" id="IPR043136">
    <property type="entry name" value="B30.2/SPRY_sf"/>
</dbReference>
<dbReference type="InterPro" id="IPR003879">
    <property type="entry name" value="Butyrophylin_SPRY"/>
</dbReference>
<dbReference type="InterPro" id="IPR013320">
    <property type="entry name" value="ConA-like_dom_sf"/>
</dbReference>
<dbReference type="InterPro" id="IPR006574">
    <property type="entry name" value="PRY"/>
</dbReference>
<dbReference type="InterPro" id="IPR003877">
    <property type="entry name" value="SPRY_dom"/>
</dbReference>
<dbReference type="InterPro" id="IPR050143">
    <property type="entry name" value="TRIM/RBCC"/>
</dbReference>
<dbReference type="InterPro" id="IPR027370">
    <property type="entry name" value="Znf-RING_euk"/>
</dbReference>
<dbReference type="InterPro" id="IPR001841">
    <property type="entry name" value="Znf_RING"/>
</dbReference>
<dbReference type="InterPro" id="IPR013083">
    <property type="entry name" value="Znf_RING/FYVE/PHD"/>
</dbReference>
<dbReference type="InterPro" id="IPR017907">
    <property type="entry name" value="Znf_RING_CS"/>
</dbReference>
<dbReference type="PANTHER" id="PTHR24103">
    <property type="entry name" value="E3 UBIQUITIN-PROTEIN LIGASE TRIM"/>
    <property type="match status" value="1"/>
</dbReference>
<dbReference type="Pfam" id="PF13765">
    <property type="entry name" value="PRY"/>
    <property type="match status" value="1"/>
</dbReference>
<dbReference type="Pfam" id="PF00622">
    <property type="entry name" value="SPRY"/>
    <property type="match status" value="1"/>
</dbReference>
<dbReference type="Pfam" id="PF13445">
    <property type="entry name" value="zf-RING_UBOX"/>
    <property type="match status" value="1"/>
</dbReference>
<dbReference type="PRINTS" id="PR01407">
    <property type="entry name" value="BUTYPHLNCDUF"/>
</dbReference>
<dbReference type="SMART" id="SM00589">
    <property type="entry name" value="PRY"/>
    <property type="match status" value="1"/>
</dbReference>
<dbReference type="SMART" id="SM00184">
    <property type="entry name" value="RING"/>
    <property type="match status" value="1"/>
</dbReference>
<dbReference type="SMART" id="SM00449">
    <property type="entry name" value="SPRY"/>
    <property type="match status" value="1"/>
</dbReference>
<dbReference type="SUPFAM" id="SSF49899">
    <property type="entry name" value="Concanavalin A-like lectins/glucanases"/>
    <property type="match status" value="1"/>
</dbReference>
<dbReference type="SUPFAM" id="SSF57850">
    <property type="entry name" value="RING/U-box"/>
    <property type="match status" value="1"/>
</dbReference>
<dbReference type="PROSITE" id="PS50188">
    <property type="entry name" value="B302_SPRY"/>
    <property type="match status" value="1"/>
</dbReference>
<dbReference type="PROSITE" id="PS00518">
    <property type="entry name" value="ZF_RING_1"/>
    <property type="match status" value="1"/>
</dbReference>
<dbReference type="PROSITE" id="PS50089">
    <property type="entry name" value="ZF_RING_2"/>
    <property type="match status" value="1"/>
</dbReference>
<accession>Q7YR31</accession>
<accession>Q1XHV6</accession>
<accession>Q1XHV9</accession>
<feature type="chain" id="PRO_0000056082" description="RING finger protein 39">
    <location>
        <begin position="1"/>
        <end position="420"/>
    </location>
</feature>
<feature type="domain" description="B30.2/SPRY" evidence="3">
    <location>
        <begin position="210"/>
        <end position="420"/>
    </location>
</feature>
<feature type="zinc finger region" description="RING-type" evidence="2">
    <location>
        <begin position="88"/>
        <end position="135"/>
    </location>
</feature>
<feature type="region of interest" description="Disordered" evidence="4">
    <location>
        <begin position="246"/>
        <end position="265"/>
    </location>
</feature>
<protein>
    <recommendedName>
        <fullName>RING finger protein 39</fullName>
        <ecNumber evidence="1">2.3.2.27</ecNumber>
    </recommendedName>
    <alternativeName>
        <fullName>Protein HZFw</fullName>
    </alternativeName>
</protein>
<sequence length="420" mass="45579">MWWRDLTRLRLWLKREAIPGEGRKAAKVNAGVGEKGIYTASSRGGPPSARSKAVTVVAEGAASRSWLSMDAPELGPGLVERLEQLATCPLCGGSFEDPVLLACEHSFCRACLARRWGTPPATGTEASPTACPCCGLPCPRRSLRSNVRLAVEVRISRELREKLAEPGARAGRRRGGRIPTMGCLDLPGEDMRKTWRRFEVPTPKSSNSEDDLPEDYPVVKNMLHRLTADLTLDPGTAHRRLLISADRRSVQLAPPGTPAPPDGPKRFDQLPAVLGAQGFGAGRHCWEVETADAASCRDSSGEDEDDEESHYAVGAAGESVQRKGCVRLCPAGAVWAVEGRGGRLWALTAPEPTLLGGVEPPPRRIRVDLDWERGRVAFYDGRSLDLLYAFQAPGPLGERIFPLFCTCDPRAPLRIVPAES</sequence>